<gene>
    <name evidence="1" type="primary">dnaK</name>
    <name type="ordered locus">Vapar_1712</name>
</gene>
<name>DNAK_VARPS</name>
<feature type="chain" id="PRO_1000205201" description="Chaperone protein DnaK">
    <location>
        <begin position="1"/>
        <end position="645"/>
    </location>
</feature>
<feature type="region of interest" description="Disordered" evidence="2">
    <location>
        <begin position="608"/>
        <end position="645"/>
    </location>
</feature>
<feature type="compositionally biased region" description="Low complexity" evidence="2">
    <location>
        <begin position="620"/>
        <end position="632"/>
    </location>
</feature>
<feature type="modified residue" description="Phosphothreonine; by autocatalysis" evidence="1">
    <location>
        <position position="200"/>
    </location>
</feature>
<dbReference type="EMBL" id="CP001635">
    <property type="protein sequence ID" value="ACS18362.1"/>
    <property type="molecule type" value="Genomic_DNA"/>
</dbReference>
<dbReference type="SMR" id="C5CU12"/>
<dbReference type="STRING" id="543728.Vapar_1712"/>
<dbReference type="KEGG" id="vap:Vapar_1712"/>
<dbReference type="eggNOG" id="COG0443">
    <property type="taxonomic scope" value="Bacteria"/>
</dbReference>
<dbReference type="HOGENOM" id="CLU_005965_2_1_4"/>
<dbReference type="OrthoDB" id="9766019at2"/>
<dbReference type="GO" id="GO:0005524">
    <property type="term" value="F:ATP binding"/>
    <property type="evidence" value="ECO:0007669"/>
    <property type="project" value="UniProtKB-UniRule"/>
</dbReference>
<dbReference type="GO" id="GO:0140662">
    <property type="term" value="F:ATP-dependent protein folding chaperone"/>
    <property type="evidence" value="ECO:0007669"/>
    <property type="project" value="InterPro"/>
</dbReference>
<dbReference type="GO" id="GO:0051082">
    <property type="term" value="F:unfolded protein binding"/>
    <property type="evidence" value="ECO:0007669"/>
    <property type="project" value="InterPro"/>
</dbReference>
<dbReference type="CDD" id="cd10234">
    <property type="entry name" value="ASKHA_NBD_HSP70_DnaK-like"/>
    <property type="match status" value="1"/>
</dbReference>
<dbReference type="FunFam" id="2.60.34.10:FF:000014">
    <property type="entry name" value="Chaperone protein DnaK HSP70"/>
    <property type="match status" value="1"/>
</dbReference>
<dbReference type="FunFam" id="1.20.1270.10:FF:000001">
    <property type="entry name" value="Molecular chaperone DnaK"/>
    <property type="match status" value="1"/>
</dbReference>
<dbReference type="FunFam" id="3.30.420.40:FF:000004">
    <property type="entry name" value="Molecular chaperone DnaK"/>
    <property type="match status" value="1"/>
</dbReference>
<dbReference type="FunFam" id="3.90.640.10:FF:000003">
    <property type="entry name" value="Molecular chaperone DnaK"/>
    <property type="match status" value="1"/>
</dbReference>
<dbReference type="Gene3D" id="1.20.1270.10">
    <property type="match status" value="1"/>
</dbReference>
<dbReference type="Gene3D" id="3.30.420.40">
    <property type="match status" value="2"/>
</dbReference>
<dbReference type="Gene3D" id="3.90.640.10">
    <property type="entry name" value="Actin, Chain A, domain 4"/>
    <property type="match status" value="1"/>
</dbReference>
<dbReference type="Gene3D" id="2.60.34.10">
    <property type="entry name" value="Substrate Binding Domain Of DNAk, Chain A, domain 1"/>
    <property type="match status" value="1"/>
</dbReference>
<dbReference type="HAMAP" id="MF_00332">
    <property type="entry name" value="DnaK"/>
    <property type="match status" value="1"/>
</dbReference>
<dbReference type="InterPro" id="IPR043129">
    <property type="entry name" value="ATPase_NBD"/>
</dbReference>
<dbReference type="InterPro" id="IPR012725">
    <property type="entry name" value="Chaperone_DnaK"/>
</dbReference>
<dbReference type="InterPro" id="IPR018181">
    <property type="entry name" value="Heat_shock_70_CS"/>
</dbReference>
<dbReference type="InterPro" id="IPR029048">
    <property type="entry name" value="HSP70_C_sf"/>
</dbReference>
<dbReference type="InterPro" id="IPR029047">
    <property type="entry name" value="HSP70_peptide-bd_sf"/>
</dbReference>
<dbReference type="InterPro" id="IPR013126">
    <property type="entry name" value="Hsp_70_fam"/>
</dbReference>
<dbReference type="NCBIfam" id="NF001413">
    <property type="entry name" value="PRK00290.1"/>
    <property type="match status" value="1"/>
</dbReference>
<dbReference type="NCBIfam" id="NF003520">
    <property type="entry name" value="PRK05183.1"/>
    <property type="match status" value="1"/>
</dbReference>
<dbReference type="NCBIfam" id="TIGR02350">
    <property type="entry name" value="prok_dnaK"/>
    <property type="match status" value="1"/>
</dbReference>
<dbReference type="PANTHER" id="PTHR19375">
    <property type="entry name" value="HEAT SHOCK PROTEIN 70KDA"/>
    <property type="match status" value="1"/>
</dbReference>
<dbReference type="Pfam" id="PF00012">
    <property type="entry name" value="HSP70"/>
    <property type="match status" value="1"/>
</dbReference>
<dbReference type="PRINTS" id="PR00301">
    <property type="entry name" value="HEATSHOCK70"/>
</dbReference>
<dbReference type="SUPFAM" id="SSF53067">
    <property type="entry name" value="Actin-like ATPase domain"/>
    <property type="match status" value="2"/>
</dbReference>
<dbReference type="SUPFAM" id="SSF100934">
    <property type="entry name" value="Heat shock protein 70kD (HSP70), C-terminal subdomain"/>
    <property type="match status" value="1"/>
</dbReference>
<dbReference type="SUPFAM" id="SSF100920">
    <property type="entry name" value="Heat shock protein 70kD (HSP70), peptide-binding domain"/>
    <property type="match status" value="1"/>
</dbReference>
<dbReference type="PROSITE" id="PS00297">
    <property type="entry name" value="HSP70_1"/>
    <property type="match status" value="1"/>
</dbReference>
<dbReference type="PROSITE" id="PS00329">
    <property type="entry name" value="HSP70_2"/>
    <property type="match status" value="1"/>
</dbReference>
<dbReference type="PROSITE" id="PS01036">
    <property type="entry name" value="HSP70_3"/>
    <property type="match status" value="1"/>
</dbReference>
<proteinExistence type="inferred from homology"/>
<accession>C5CU12</accession>
<keyword id="KW-0067">ATP-binding</keyword>
<keyword id="KW-0143">Chaperone</keyword>
<keyword id="KW-0547">Nucleotide-binding</keyword>
<keyword id="KW-0597">Phosphoprotein</keyword>
<keyword id="KW-0346">Stress response</keyword>
<comment type="function">
    <text evidence="1">Acts as a chaperone.</text>
</comment>
<comment type="induction">
    <text evidence="1">By stress conditions e.g. heat shock.</text>
</comment>
<comment type="similarity">
    <text evidence="1">Belongs to the heat shock protein 70 family.</text>
</comment>
<sequence length="645" mass="69013">MAKIIGIDLGTTNSCVSIMEGNTTRVIENSEGARTTPSIVAYQEDGEVLVGASAKRQAVTNPKNTLYAIKRLIGRKFEEKEVQKDIDLMPYTIAKADNGDAWVEVRGKKIAPQQVSADILRKMKKTAEDYLGEPVTEAVITVPAYFNDAQRQATKDAGRIAGLDVKRIINEPTAAALAFGLDKQDKADRKIAVYDLGGGTFDISIIEIADVDGEKQFEVLSTNGDTFLGGEDFDQRIIDYIIAEFKKEQGVDLGKDVLALQRLKEAAEKAKIELSNSAQTDINLPYITADASGPKHLNIKLTRAKLESLVDELVERTIAPCRLAIKDAGISVSDINDVILVGGMTRMPKVQEKVKAFFGKEPRKDVNPDEAVAVGAAIQGQVLSGDRKDVLLLDVTPLSLGIETMGGVMTKMITKNTTIPTKFAQTFSTAEDNQPAVTIKVFQGEREIASGNKLLGEFNLEGIPPAARGTPQIEVSFDIDANGILHVGAKDKGTGKENKITIKANSGLSEDEIQKMVKDAELNAAEDKKKVELAQARNQGEAMVHSVKKSLGEHGASLDAGEKEKIEAAIKDLEEALKGEDKASIEEKTNTLMTASQKLGEKMYADAQAAAGAAGGPGAAAGPEAASAPADDNVVDAEVKEVKKG</sequence>
<organism>
    <name type="scientific">Variovorax paradoxus (strain S110)</name>
    <dbReference type="NCBI Taxonomy" id="543728"/>
    <lineage>
        <taxon>Bacteria</taxon>
        <taxon>Pseudomonadati</taxon>
        <taxon>Pseudomonadota</taxon>
        <taxon>Betaproteobacteria</taxon>
        <taxon>Burkholderiales</taxon>
        <taxon>Comamonadaceae</taxon>
        <taxon>Variovorax</taxon>
    </lineage>
</organism>
<evidence type="ECO:0000255" key="1">
    <source>
        <dbReference type="HAMAP-Rule" id="MF_00332"/>
    </source>
</evidence>
<evidence type="ECO:0000256" key="2">
    <source>
        <dbReference type="SAM" id="MobiDB-lite"/>
    </source>
</evidence>
<reference key="1">
    <citation type="journal article" date="2011" name="J. Bacteriol.">
        <title>Complete genome sequence of the metabolically versatile plant growth-promoting endophyte, Variovorax paradoxus S110.</title>
        <authorList>
            <person name="Han J.I."/>
            <person name="Choi H.K."/>
            <person name="Lee S.W."/>
            <person name="Orwin P.M."/>
            <person name="Kim J."/>
            <person name="Laroe S.L."/>
            <person name="Kim T.G."/>
            <person name="O'Neil J."/>
            <person name="Leadbetter J.R."/>
            <person name="Lee S.Y."/>
            <person name="Hur C.G."/>
            <person name="Spain J.C."/>
            <person name="Ovchinnikova G."/>
            <person name="Goodwin L."/>
            <person name="Han C."/>
        </authorList>
    </citation>
    <scope>NUCLEOTIDE SEQUENCE [LARGE SCALE GENOMIC DNA]</scope>
    <source>
        <strain>S110</strain>
    </source>
</reference>
<protein>
    <recommendedName>
        <fullName evidence="1">Chaperone protein DnaK</fullName>
    </recommendedName>
    <alternativeName>
        <fullName evidence="1">HSP70</fullName>
    </alternativeName>
    <alternativeName>
        <fullName evidence="1">Heat shock 70 kDa protein</fullName>
    </alternativeName>
    <alternativeName>
        <fullName evidence="1">Heat shock protein 70</fullName>
    </alternativeName>
</protein>